<evidence type="ECO:0000250" key="1">
    <source>
        <dbReference type="UniProtKB" id="Q67A25"/>
    </source>
</evidence>
<evidence type="ECO:0000269" key="2">
    <source>
    </source>
</evidence>
<evidence type="ECO:0000303" key="3">
    <source>
    </source>
</evidence>
<evidence type="ECO:0000305" key="4"/>
<protein>
    <recommendedName>
        <fullName evidence="3">Norbelladine synthase</fullName>
        <shortName evidence="3">NpNBS</shortName>
        <ecNumber evidence="2">4.2.1.-</ecNumber>
    </recommendedName>
</protein>
<dbReference type="EC" id="4.2.1.-" evidence="2"/>
<dbReference type="EMBL" id="MG948545">
    <property type="protein sequence ID" value="AYV96792.1"/>
    <property type="molecule type" value="mRNA"/>
</dbReference>
<dbReference type="SMR" id="A0A3G5BB24"/>
<dbReference type="BioCyc" id="MetaCyc:MONOMER-124407"/>
<dbReference type="GO" id="GO:0005737">
    <property type="term" value="C:cytoplasm"/>
    <property type="evidence" value="ECO:0007669"/>
    <property type="project" value="TreeGrafter"/>
</dbReference>
<dbReference type="GO" id="GO:0005634">
    <property type="term" value="C:nucleus"/>
    <property type="evidence" value="ECO:0007669"/>
    <property type="project" value="TreeGrafter"/>
</dbReference>
<dbReference type="GO" id="GO:0010427">
    <property type="term" value="F:abscisic acid binding"/>
    <property type="evidence" value="ECO:0007669"/>
    <property type="project" value="TreeGrafter"/>
</dbReference>
<dbReference type="GO" id="GO:0016829">
    <property type="term" value="F:lyase activity"/>
    <property type="evidence" value="ECO:0007669"/>
    <property type="project" value="UniProtKB-KW"/>
</dbReference>
<dbReference type="GO" id="GO:0004864">
    <property type="term" value="F:protein phosphatase inhibitor activity"/>
    <property type="evidence" value="ECO:0007669"/>
    <property type="project" value="TreeGrafter"/>
</dbReference>
<dbReference type="GO" id="GO:0038023">
    <property type="term" value="F:signaling receptor activity"/>
    <property type="evidence" value="ECO:0007669"/>
    <property type="project" value="TreeGrafter"/>
</dbReference>
<dbReference type="GO" id="GO:0009738">
    <property type="term" value="P:abscisic acid-activated signaling pathway"/>
    <property type="evidence" value="ECO:0007669"/>
    <property type="project" value="TreeGrafter"/>
</dbReference>
<dbReference type="GO" id="GO:0009820">
    <property type="term" value="P:alkaloid metabolic process"/>
    <property type="evidence" value="ECO:0007669"/>
    <property type="project" value="UniProtKB-KW"/>
</dbReference>
<dbReference type="GO" id="GO:0006952">
    <property type="term" value="P:defense response"/>
    <property type="evidence" value="ECO:0007669"/>
    <property type="project" value="InterPro"/>
</dbReference>
<dbReference type="CDD" id="cd07816">
    <property type="entry name" value="Bet_v1-like"/>
    <property type="match status" value="1"/>
</dbReference>
<dbReference type="Gene3D" id="3.30.530.20">
    <property type="match status" value="1"/>
</dbReference>
<dbReference type="InterPro" id="IPR000916">
    <property type="entry name" value="Bet_v_I/MLP"/>
</dbReference>
<dbReference type="InterPro" id="IPR050279">
    <property type="entry name" value="Plant_def-hormone_signal"/>
</dbReference>
<dbReference type="InterPro" id="IPR023393">
    <property type="entry name" value="START-like_dom_sf"/>
</dbReference>
<dbReference type="PANTHER" id="PTHR31213:SF19">
    <property type="entry name" value="BET V I_MAJOR LATEX PROTEIN DOMAIN-CONTAINING PROTEIN"/>
    <property type="match status" value="1"/>
</dbReference>
<dbReference type="PANTHER" id="PTHR31213">
    <property type="entry name" value="OS08G0374000 PROTEIN-RELATED"/>
    <property type="match status" value="1"/>
</dbReference>
<dbReference type="Pfam" id="PF00407">
    <property type="entry name" value="Bet_v_1"/>
    <property type="match status" value="1"/>
</dbReference>
<dbReference type="SMART" id="SM01037">
    <property type="entry name" value="Bet_v_1"/>
    <property type="match status" value="1"/>
</dbReference>
<dbReference type="SUPFAM" id="SSF55961">
    <property type="entry name" value="Bet v1-like"/>
    <property type="match status" value="1"/>
</dbReference>
<proteinExistence type="evidence at protein level"/>
<reference key="1">
    <citation type="journal article" date="2018" name="BMC Plant Biol.">
        <title>Cloning and characterization of norbelladine synthase catalyzing the first committed reaction in Amaryllidaceae alkaloid biosynthesis.</title>
        <authorList>
            <person name="Singh A."/>
            <person name="Massicotte M.-A."/>
            <person name="Garand A."/>
            <person name="Tousignant L."/>
            <person name="Ouellette V."/>
            <person name="Berube G."/>
            <person name="Desgagne-Penix I."/>
        </authorList>
    </citation>
    <scope>NUCLEOTIDE SEQUENCE [MRNA]</scope>
    <scope>FUNCTION</scope>
    <scope>CATALYTIC ACTIVITY</scope>
    <scope>PATHWAY</scope>
    <scope>TISSUE SPECIFICITY</scope>
    <scope>BIOPHYSICOCHEMICAL PROPERTIES</scope>
    <source>
        <strain>cv. King Alfred</strain>
        <tissue>Bulb</tissue>
    </source>
</reference>
<reference key="2">
    <citation type="journal article" date="2017" name="Sci. Rep.">
        <title>Transcriptome and metabolome profiling of Narcissus pseudonarcissus 'King Alfred' reveal components of Amaryllidaceae alkaloid metabolism.</title>
        <authorList>
            <person name="Singh A."/>
            <person name="Desgagne-Penix I."/>
        </authorList>
    </citation>
    <scope>REVIEW ON THE AMARYLLIDACEAE ALKALOID METABOLISM</scope>
    <source>
        <strain>cv. King Alfred</strain>
        <tissue>Bulb</tissue>
    </source>
</reference>
<gene>
    <name evidence="3" type="primary">NBS</name>
</gene>
<sequence>MKGSLSHELEVSLPADQLWQVYSTLRLAQLSAELLPTVISKVEVEEGDGGVGTLLRVTYALGIPGMKYHKERFVKIDHEKRLKEALFVEGGHLDLGFSSYLIRLEILEKGHNSSVIKSTVEYEVDEEHAANASFATTDPFMIIGGAVSEHLLQKKSNCSIMLL</sequence>
<organism>
    <name type="scientific">Narcissus pseudonarcissus</name>
    <name type="common">Daffodil</name>
    <dbReference type="NCBI Taxonomy" id="39639"/>
    <lineage>
        <taxon>Eukaryota</taxon>
        <taxon>Viridiplantae</taxon>
        <taxon>Streptophyta</taxon>
        <taxon>Embryophyta</taxon>
        <taxon>Tracheophyta</taxon>
        <taxon>Spermatophyta</taxon>
        <taxon>Magnoliopsida</taxon>
        <taxon>Liliopsida</taxon>
        <taxon>Asparagales</taxon>
        <taxon>Amaryllidaceae</taxon>
        <taxon>Amaryllidoideae</taxon>
        <taxon>Narcissus</taxon>
    </lineage>
</organism>
<name>NBS_NARPS</name>
<accession>A0A3G5BB24</accession>
<comment type="function">
    <text evidence="2">Catalyzes the condensation of tyramine and 3,4-dihydroxybenzaldehyde (3,4-DHBA) to form norbelladine, the common precursor to all Amaryllidaceae alkaloids such as galanthamine, lycorine and haemanthamine, and including haemanthamine- and crinamine-type alkaloids, promising anticancer agents.</text>
</comment>
<comment type="catalytic activity">
    <reaction evidence="2">
        <text>3,4-dihydroxybenzaldehyde + tyramine + AH2 = norbelladine + A + H2O</text>
        <dbReference type="Rhea" id="RHEA:63188"/>
        <dbReference type="ChEBI" id="CHEBI:13193"/>
        <dbReference type="ChEBI" id="CHEBI:15377"/>
        <dbReference type="ChEBI" id="CHEBI:17499"/>
        <dbReference type="ChEBI" id="CHEBI:50205"/>
        <dbReference type="ChEBI" id="CHEBI:134001"/>
        <dbReference type="ChEBI" id="CHEBI:327995"/>
    </reaction>
    <physiologicalReaction direction="left-to-right" evidence="2">
        <dbReference type="Rhea" id="RHEA:63189"/>
    </physiologicalReaction>
</comment>
<comment type="biophysicochemical properties">
    <phDependence>
        <text evidence="2">Optimum pH is 4.</text>
    </phDependence>
</comment>
<comment type="pathway">
    <text evidence="2">Alkaloid biosynthesis.</text>
</comment>
<comment type="tissue specificity">
    <text evidence="2">Mostly expressed in bulbs, and, to a lower extent, in roots, stems, leaves and flowers.</text>
</comment>
<comment type="similarity">
    <text evidence="4">Belongs to the BetVI family.</text>
</comment>
<feature type="chain" id="PRO_0000450640" description="Norbelladine synthase">
    <location>
        <begin position="1"/>
        <end position="163"/>
    </location>
</feature>
<feature type="active site" description="Proton donor" evidence="1">
    <location>
        <position position="83"/>
    </location>
</feature>
<feature type="binding site" evidence="1">
    <location>
        <begin position="68"/>
        <end position="71"/>
    </location>
    <ligand>
        <name>tyramine</name>
        <dbReference type="ChEBI" id="CHEBI:327995"/>
    </ligand>
</feature>
<keyword id="KW-0017">Alkaloid metabolism</keyword>
<keyword id="KW-0456">Lyase</keyword>